<comment type="function">
    <text>Inhibitor of protein-phosphatase 1.</text>
</comment>
<comment type="subcellular location">
    <subcellularLocation>
        <location>Cytoplasm</location>
    </subcellularLocation>
</comment>
<comment type="PTM">
    <text evidence="1">Phosphorylation of Thr-33 is required for activity.</text>
</comment>
<comment type="PTM">
    <text evidence="1">Dopamine- and cyclic AMP-regulated neuronal phosphoprotein.</text>
</comment>
<comment type="similarity">
    <text evidence="7">Belongs to the protein phosphatase inhibitor 1 family.</text>
</comment>
<evidence type="ECO:0000250" key="1"/>
<evidence type="ECO:0000250" key="2">
    <source>
        <dbReference type="UniProtKB" id="P07516"/>
    </source>
</evidence>
<evidence type="ECO:0000250" key="3">
    <source>
        <dbReference type="UniProtKB" id="Q60829"/>
    </source>
</evidence>
<evidence type="ECO:0000250" key="4">
    <source>
        <dbReference type="UniProtKB" id="Q6J4I0"/>
    </source>
</evidence>
<evidence type="ECO:0000250" key="5">
    <source>
        <dbReference type="UniProtKB" id="Q9UD71"/>
    </source>
</evidence>
<evidence type="ECO:0000256" key="6">
    <source>
        <dbReference type="SAM" id="MobiDB-lite"/>
    </source>
</evidence>
<evidence type="ECO:0000305" key="7"/>
<name>PPR1B_PIG</name>
<organism>
    <name type="scientific">Sus scrofa</name>
    <name type="common">Pig</name>
    <dbReference type="NCBI Taxonomy" id="9823"/>
    <lineage>
        <taxon>Eukaryota</taxon>
        <taxon>Metazoa</taxon>
        <taxon>Chordata</taxon>
        <taxon>Craniata</taxon>
        <taxon>Vertebrata</taxon>
        <taxon>Euteleostomi</taxon>
        <taxon>Mammalia</taxon>
        <taxon>Eutheria</taxon>
        <taxon>Laurasiatheria</taxon>
        <taxon>Artiodactyla</taxon>
        <taxon>Suina</taxon>
        <taxon>Suidae</taxon>
        <taxon>Sus</taxon>
    </lineage>
</organism>
<gene>
    <name type="primary">PPP1R1B</name>
</gene>
<reference key="1">
    <citation type="journal article" date="1996" name="Mamm. Genome">
        <title>Evaluation and characterization of a porcine small intestine cDNA library: analysis of 839 clones.</title>
        <authorList>
            <person name="Winteroe A.K."/>
            <person name="Fredholm M."/>
            <person name="Davies W."/>
        </authorList>
    </citation>
    <scope>NUCLEOTIDE SEQUENCE [LARGE SCALE MRNA]</scope>
    <source>
        <tissue>Small intestine</tissue>
    </source>
</reference>
<feature type="chain" id="PRO_0000071475" description="Protein phosphatase 1 regulatory subunit 1B">
    <location>
        <begin position="1" status="less than"/>
        <end position="137" status="greater than"/>
    </location>
</feature>
<feature type="region of interest" description="Disordered" evidence="6">
    <location>
        <begin position="1"/>
        <end position="137"/>
    </location>
</feature>
<feature type="compositionally biased region" description="Basic and acidic residues" evidence="6">
    <location>
        <begin position="40"/>
        <end position="62"/>
    </location>
</feature>
<feature type="compositionally biased region" description="Polar residues" evidence="6">
    <location>
        <begin position="88"/>
        <end position="99"/>
    </location>
</feature>
<feature type="compositionally biased region" description="Basic and acidic residues" evidence="6">
    <location>
        <begin position="108"/>
        <end position="117"/>
    </location>
</feature>
<feature type="compositionally biased region" description="Acidic residues" evidence="6">
    <location>
        <begin position="118"/>
        <end position="137"/>
    </location>
</feature>
<feature type="modified residue" description="Phosphothreonine; by PKA" evidence="2">
    <location>
        <position position="33"/>
    </location>
</feature>
<feature type="modified residue" description="Phosphoserine" evidence="3">
    <location>
        <position position="44"/>
    </location>
</feature>
<feature type="modified residue" description="Phosphoserine" evidence="3">
    <location>
        <position position="45"/>
    </location>
</feature>
<feature type="modified residue" description="Phosphothreonine; by CDK5" evidence="5">
    <location>
        <position position="74"/>
    </location>
</feature>
<feature type="modified residue" description="Phosphoserine" evidence="3">
    <location>
        <position position="101"/>
    </location>
</feature>
<feature type="modified residue" description="Phosphoserine" evidence="4">
    <location>
        <position position="136"/>
    </location>
</feature>
<feature type="non-terminal residue">
    <location>
        <position position="1"/>
    </location>
</feature>
<feature type="non-terminal residue">
    <location>
        <position position="137"/>
    </location>
</feature>
<dbReference type="EMBL" id="F14627">
    <property type="protein sequence ID" value="CAA23161.1"/>
    <property type="molecule type" value="mRNA"/>
</dbReference>
<dbReference type="STRING" id="9823.ENSSSCP00000065477"/>
<dbReference type="PaxDb" id="9823-ENSSSCP00000018546"/>
<dbReference type="PeptideAtlas" id="Q29277"/>
<dbReference type="eggNOG" id="ENOG502S19Z">
    <property type="taxonomic scope" value="Eukaryota"/>
</dbReference>
<dbReference type="InParanoid" id="Q29277"/>
<dbReference type="Proteomes" id="UP000008227">
    <property type="component" value="Unplaced"/>
</dbReference>
<dbReference type="Proteomes" id="UP000314985">
    <property type="component" value="Unplaced"/>
</dbReference>
<dbReference type="Proteomes" id="UP000694570">
    <property type="component" value="Unplaced"/>
</dbReference>
<dbReference type="Proteomes" id="UP000694571">
    <property type="component" value="Unplaced"/>
</dbReference>
<dbReference type="Proteomes" id="UP000694720">
    <property type="component" value="Unplaced"/>
</dbReference>
<dbReference type="Proteomes" id="UP000694722">
    <property type="component" value="Unplaced"/>
</dbReference>
<dbReference type="Proteomes" id="UP000694723">
    <property type="component" value="Unplaced"/>
</dbReference>
<dbReference type="Proteomes" id="UP000694724">
    <property type="component" value="Unplaced"/>
</dbReference>
<dbReference type="Proteomes" id="UP000694725">
    <property type="component" value="Unplaced"/>
</dbReference>
<dbReference type="Proteomes" id="UP000694726">
    <property type="component" value="Unplaced"/>
</dbReference>
<dbReference type="Proteomes" id="UP000694727">
    <property type="component" value="Unplaced"/>
</dbReference>
<dbReference type="Proteomes" id="UP000694728">
    <property type="component" value="Unplaced"/>
</dbReference>
<dbReference type="GO" id="GO:0005737">
    <property type="term" value="C:cytoplasm"/>
    <property type="evidence" value="ECO:0000318"/>
    <property type="project" value="GO_Central"/>
</dbReference>
<dbReference type="GO" id="GO:0004864">
    <property type="term" value="F:protein phosphatase inhibitor activity"/>
    <property type="evidence" value="ECO:0007669"/>
    <property type="project" value="UniProtKB-KW"/>
</dbReference>
<dbReference type="GO" id="GO:0035556">
    <property type="term" value="P:intracellular signal transduction"/>
    <property type="evidence" value="ECO:0000318"/>
    <property type="project" value="GO_Central"/>
</dbReference>
<dbReference type="InterPro" id="IPR008466">
    <property type="entry name" value="PPP1R1A/B/C"/>
</dbReference>
<dbReference type="PANTHER" id="PTHR15417:SF2">
    <property type="entry name" value="PROTEIN PHOSPHATASE 1 REGULATORY SUBUNIT 1B"/>
    <property type="match status" value="1"/>
</dbReference>
<dbReference type="PANTHER" id="PTHR15417">
    <property type="entry name" value="PROTEIN PHOSPHATASE INHIBITOR AND DOPAMINE- AND CAMP-REGULATED NEURONAL PHOSPHOPROTEIN"/>
    <property type="match status" value="1"/>
</dbReference>
<dbReference type="Pfam" id="PF05395">
    <property type="entry name" value="DARPP-32"/>
    <property type="match status" value="1"/>
</dbReference>
<accession>Q29277</accession>
<keyword id="KW-0963">Cytoplasm</keyword>
<keyword id="KW-0597">Phosphoprotein</keyword>
<keyword id="KW-0650">Protein phosphatase inhibitor</keyword>
<keyword id="KW-1185">Reference proteome</keyword>
<proteinExistence type="evidence at transcript level"/>
<protein>
    <recommendedName>
        <fullName>Protein phosphatase 1 regulatory subunit 1B</fullName>
    </recommendedName>
    <alternativeName>
        <fullName>DARPP-32</fullName>
    </alternativeName>
    <alternativeName>
        <fullName>Dopamine- and cAMP-regulated neuronal phosphoprotein</fullName>
    </alternativeName>
</protein>
<sequence>DPKDRKKIQFSXPAPPSQLDPRQLEMIRRRRPTPAMLFRLXEHSSPEEEASPHQRAAGEGHHLKSKRPNPCAYTPPSLKAVQRIAESHLQSISNLGENQASEEEDELGELRELGYPREEEEEEEEDDEEEEEEEDSQ</sequence>